<comment type="function">
    <text evidence="1">Chaperone involved in the correct folding and assembly of outer membrane proteins. Recognizes specific patterns of aromatic residues and the orientation of their side chains, which are found more frequently in integral outer membrane proteins. May act in both early periplasmic and late outer membrane-associated steps of protein maturation.</text>
</comment>
<comment type="catalytic activity">
    <reaction evidence="1">
        <text>[protein]-peptidylproline (omega=180) = [protein]-peptidylproline (omega=0)</text>
        <dbReference type="Rhea" id="RHEA:16237"/>
        <dbReference type="Rhea" id="RHEA-COMP:10747"/>
        <dbReference type="Rhea" id="RHEA-COMP:10748"/>
        <dbReference type="ChEBI" id="CHEBI:83833"/>
        <dbReference type="ChEBI" id="CHEBI:83834"/>
        <dbReference type="EC" id="5.2.1.8"/>
    </reaction>
</comment>
<comment type="subcellular location">
    <subcellularLocation>
        <location evidence="1">Periplasm</location>
    </subcellularLocation>
    <text evidence="1">Is capable of associating with the outer membrane.</text>
</comment>
<comment type="domain">
    <text evidence="1">The PPIase activity resides only in the second parvulin domain. The N-terminal region and the C-terminal tail are necessary and sufficient for the chaperone activity of SurA. The PPIase activity is dispensable for SurA to function as a chaperone. The N-terminal region and the C-terminal tail are also required for porin recognition.</text>
</comment>
<keyword id="KW-0143">Chaperone</keyword>
<keyword id="KW-0413">Isomerase</keyword>
<keyword id="KW-0574">Periplasm</keyword>
<keyword id="KW-1185">Reference proteome</keyword>
<keyword id="KW-0677">Repeat</keyword>
<keyword id="KW-0697">Rotamase</keyword>
<keyword id="KW-0732">Signal</keyword>
<proteinExistence type="inferred from homology"/>
<protein>
    <recommendedName>
        <fullName evidence="1">Chaperone SurA</fullName>
    </recommendedName>
    <alternativeName>
        <fullName evidence="1">Peptidyl-prolyl cis-trans isomerase SurA</fullName>
        <shortName evidence="1">PPIase SurA</shortName>
        <ecNumber evidence="1">5.2.1.8</ecNumber>
    </alternativeName>
    <alternativeName>
        <fullName evidence="1">Rotamase SurA</fullName>
    </alternativeName>
</protein>
<name>SURA_METFK</name>
<gene>
    <name evidence="1" type="primary">surA</name>
    <name type="ordered locus">Mfla_2150</name>
</gene>
<organism>
    <name type="scientific">Methylobacillus flagellatus (strain ATCC 51484 / DSM 6875 / VKM B-1610 / KT)</name>
    <dbReference type="NCBI Taxonomy" id="265072"/>
    <lineage>
        <taxon>Bacteria</taxon>
        <taxon>Pseudomonadati</taxon>
        <taxon>Pseudomonadota</taxon>
        <taxon>Betaproteobacteria</taxon>
        <taxon>Nitrosomonadales</taxon>
        <taxon>Methylophilaceae</taxon>
        <taxon>Methylobacillus</taxon>
    </lineage>
</organism>
<reference key="1">
    <citation type="submission" date="2006-03" db="EMBL/GenBank/DDBJ databases">
        <title>Complete sequence of Methylobacillus flagellatus KT.</title>
        <authorList>
            <consortium name="US DOE Joint Genome Institute"/>
            <person name="Copeland A."/>
            <person name="Lucas S."/>
            <person name="Lapidus A."/>
            <person name="Barry K."/>
            <person name="Detter J.C."/>
            <person name="Glavina del Rio T."/>
            <person name="Hammon N."/>
            <person name="Israni S."/>
            <person name="Dalin E."/>
            <person name="Tice H."/>
            <person name="Pitluck S."/>
            <person name="Brettin T."/>
            <person name="Bruce D."/>
            <person name="Han C."/>
            <person name="Tapia R."/>
            <person name="Saunders E."/>
            <person name="Gilna P."/>
            <person name="Schmutz J."/>
            <person name="Larimer F."/>
            <person name="Land M."/>
            <person name="Kyrpides N."/>
            <person name="Anderson I."/>
            <person name="Richardson P."/>
        </authorList>
    </citation>
    <scope>NUCLEOTIDE SEQUENCE [LARGE SCALE GENOMIC DNA]</scope>
    <source>
        <strain>ATCC 51484 / DSM 6875 / VKM B-1610 / KT</strain>
    </source>
</reference>
<sequence length="437" mass="49426">MHNHVFKTIARHGLIALFFFFSISAMAAEVAKMDRIVAIVDQGVITEKELEDRIQTVIAQLEKQGTQLPPRDVLQKQILERLINDRLQLQYAAQTGLRVDDAQLDKTIERIAEQNKLSTGEFRKALEAEGIPYRKFREDIRNEIILARLREREVDNRVNVTESEIDNFLTTQSSRNDIQDEFEVAHILIRAPEESTPEELQKLKAKAEAALKELQSGADFAQVSAGYSDAPNALEGGILGWKASSQLPSLFVDALQALQPGQLSPVLRSPNGYHILKLLNRRGGSSPLVVDQTHVRHILIKLSEVVSELEAEQKINSIKERLDHGADFAELARQYSEDASANNGGDLGWTNAGDTVPAFEKAMNALDINEISAPVRTPFGWHIIQVLERRKQDMTQESARLKARQEIRARKADDAFQDWLSELRDRAYVEYRLEDKY</sequence>
<accession>Q1GZC0</accession>
<dbReference type="EC" id="5.2.1.8" evidence="1"/>
<dbReference type="EMBL" id="CP000284">
    <property type="protein sequence ID" value="ABE50417.1"/>
    <property type="molecule type" value="Genomic_DNA"/>
</dbReference>
<dbReference type="RefSeq" id="WP_011480371.1">
    <property type="nucleotide sequence ID" value="NC_007947.1"/>
</dbReference>
<dbReference type="SMR" id="Q1GZC0"/>
<dbReference type="STRING" id="265072.Mfla_2150"/>
<dbReference type="KEGG" id="mfa:Mfla_2150"/>
<dbReference type="eggNOG" id="COG0760">
    <property type="taxonomic scope" value="Bacteria"/>
</dbReference>
<dbReference type="HOGENOM" id="CLU_034646_11_0_4"/>
<dbReference type="Proteomes" id="UP000002440">
    <property type="component" value="Chromosome"/>
</dbReference>
<dbReference type="GO" id="GO:0030288">
    <property type="term" value="C:outer membrane-bounded periplasmic space"/>
    <property type="evidence" value="ECO:0007669"/>
    <property type="project" value="InterPro"/>
</dbReference>
<dbReference type="GO" id="GO:0042277">
    <property type="term" value="F:peptide binding"/>
    <property type="evidence" value="ECO:0007669"/>
    <property type="project" value="InterPro"/>
</dbReference>
<dbReference type="GO" id="GO:0003755">
    <property type="term" value="F:peptidyl-prolyl cis-trans isomerase activity"/>
    <property type="evidence" value="ECO:0007669"/>
    <property type="project" value="UniProtKB-UniRule"/>
</dbReference>
<dbReference type="GO" id="GO:0051082">
    <property type="term" value="F:unfolded protein binding"/>
    <property type="evidence" value="ECO:0007669"/>
    <property type="project" value="UniProtKB-UniRule"/>
</dbReference>
<dbReference type="GO" id="GO:0043165">
    <property type="term" value="P:Gram-negative-bacterium-type cell outer membrane assembly"/>
    <property type="evidence" value="ECO:0007669"/>
    <property type="project" value="InterPro"/>
</dbReference>
<dbReference type="GO" id="GO:0006457">
    <property type="term" value="P:protein folding"/>
    <property type="evidence" value="ECO:0007669"/>
    <property type="project" value="UniProtKB-UniRule"/>
</dbReference>
<dbReference type="GO" id="GO:0050821">
    <property type="term" value="P:protein stabilization"/>
    <property type="evidence" value="ECO:0007669"/>
    <property type="project" value="InterPro"/>
</dbReference>
<dbReference type="Gene3D" id="3.10.50.40">
    <property type="match status" value="2"/>
</dbReference>
<dbReference type="Gene3D" id="1.10.4030.10">
    <property type="entry name" value="Porin chaperone SurA, peptide-binding domain"/>
    <property type="match status" value="1"/>
</dbReference>
<dbReference type="HAMAP" id="MF_01183">
    <property type="entry name" value="Chaperone_SurA"/>
    <property type="match status" value="1"/>
</dbReference>
<dbReference type="InterPro" id="IPR050280">
    <property type="entry name" value="OMP_Chaperone_SurA"/>
</dbReference>
<dbReference type="InterPro" id="IPR046357">
    <property type="entry name" value="PPIase_dom_sf"/>
</dbReference>
<dbReference type="InterPro" id="IPR000297">
    <property type="entry name" value="PPIase_PpiC"/>
</dbReference>
<dbReference type="InterPro" id="IPR023058">
    <property type="entry name" value="PPIase_PpiC_CS"/>
</dbReference>
<dbReference type="InterPro" id="IPR023034">
    <property type="entry name" value="PPIase_SurA"/>
</dbReference>
<dbReference type="InterPro" id="IPR015391">
    <property type="entry name" value="SurA_N"/>
</dbReference>
<dbReference type="InterPro" id="IPR027304">
    <property type="entry name" value="Trigger_fact/SurA_dom_sf"/>
</dbReference>
<dbReference type="PANTHER" id="PTHR47637">
    <property type="entry name" value="CHAPERONE SURA"/>
    <property type="match status" value="1"/>
</dbReference>
<dbReference type="PANTHER" id="PTHR47637:SF1">
    <property type="entry name" value="CHAPERONE SURA"/>
    <property type="match status" value="1"/>
</dbReference>
<dbReference type="Pfam" id="PF00639">
    <property type="entry name" value="Rotamase"/>
    <property type="match status" value="1"/>
</dbReference>
<dbReference type="Pfam" id="PF13616">
    <property type="entry name" value="Rotamase_3"/>
    <property type="match status" value="1"/>
</dbReference>
<dbReference type="Pfam" id="PF09312">
    <property type="entry name" value="SurA_N"/>
    <property type="match status" value="1"/>
</dbReference>
<dbReference type="SUPFAM" id="SSF54534">
    <property type="entry name" value="FKBP-like"/>
    <property type="match status" value="2"/>
</dbReference>
<dbReference type="SUPFAM" id="SSF109998">
    <property type="entry name" value="Triger factor/SurA peptide-binding domain-like"/>
    <property type="match status" value="1"/>
</dbReference>
<dbReference type="PROSITE" id="PS01096">
    <property type="entry name" value="PPIC_PPIASE_1"/>
    <property type="match status" value="1"/>
</dbReference>
<dbReference type="PROSITE" id="PS50198">
    <property type="entry name" value="PPIC_PPIASE_2"/>
    <property type="match status" value="2"/>
</dbReference>
<evidence type="ECO:0000255" key="1">
    <source>
        <dbReference type="HAMAP-Rule" id="MF_01183"/>
    </source>
</evidence>
<feature type="signal peptide" evidence="1">
    <location>
        <begin position="1"/>
        <end position="27"/>
    </location>
</feature>
<feature type="chain" id="PRO_0000270020" description="Chaperone SurA">
    <location>
        <begin position="28"/>
        <end position="437"/>
    </location>
</feature>
<feature type="domain" description="PpiC 1" evidence="1">
    <location>
        <begin position="179"/>
        <end position="280"/>
    </location>
</feature>
<feature type="domain" description="PpiC 2" evidence="1">
    <location>
        <begin position="290"/>
        <end position="388"/>
    </location>
</feature>